<evidence type="ECO:0000255" key="1">
    <source>
        <dbReference type="HAMAP-Rule" id="MF_01959"/>
    </source>
</evidence>
<evidence type="ECO:0000256" key="2">
    <source>
        <dbReference type="SAM" id="MobiDB-lite"/>
    </source>
</evidence>
<reference key="1">
    <citation type="journal article" date="2011" name="Stand. Genomic Sci.">
        <title>Complete genome sequence of Rhodospirillum rubrum type strain (S1).</title>
        <authorList>
            <person name="Munk A.C."/>
            <person name="Copeland A."/>
            <person name="Lucas S."/>
            <person name="Lapidus A."/>
            <person name="Del Rio T.G."/>
            <person name="Barry K."/>
            <person name="Detter J.C."/>
            <person name="Hammon N."/>
            <person name="Israni S."/>
            <person name="Pitluck S."/>
            <person name="Brettin T."/>
            <person name="Bruce D."/>
            <person name="Han C."/>
            <person name="Tapia R."/>
            <person name="Gilna P."/>
            <person name="Schmutz J."/>
            <person name="Larimer F."/>
            <person name="Land M."/>
            <person name="Kyrpides N.C."/>
            <person name="Mavromatis K."/>
            <person name="Richardson P."/>
            <person name="Rohde M."/>
            <person name="Goeker M."/>
            <person name="Klenk H.P."/>
            <person name="Zhang Y."/>
            <person name="Roberts G.P."/>
            <person name="Reslewic S."/>
            <person name="Schwartz D.C."/>
        </authorList>
    </citation>
    <scope>NUCLEOTIDE SEQUENCE [LARGE SCALE GENOMIC DNA]</scope>
    <source>
        <strain>ATCC 11170 / ATH 1.1.1 / DSM 467 / LMG 4362 / NCIMB 8255 / S1</strain>
    </source>
</reference>
<dbReference type="EMBL" id="CP000230">
    <property type="protein sequence ID" value="ABC20841.1"/>
    <property type="molecule type" value="Genomic_DNA"/>
</dbReference>
<dbReference type="RefSeq" id="WP_011387797.1">
    <property type="nucleotide sequence ID" value="NC_007643.1"/>
</dbReference>
<dbReference type="RefSeq" id="YP_425128.1">
    <property type="nucleotide sequence ID" value="NC_007643.1"/>
</dbReference>
<dbReference type="SMR" id="Q2RYF4"/>
<dbReference type="STRING" id="269796.Rru_A0036"/>
<dbReference type="EnsemblBacteria" id="ABC20841">
    <property type="protein sequence ID" value="ABC20841"/>
    <property type="gene ID" value="Rru_A0036"/>
</dbReference>
<dbReference type="KEGG" id="rru:Rru_A0036"/>
<dbReference type="PATRIC" id="fig|269796.9.peg.85"/>
<dbReference type="eggNOG" id="COG2332">
    <property type="taxonomic scope" value="Bacteria"/>
</dbReference>
<dbReference type="HOGENOM" id="CLU_079503_1_1_5"/>
<dbReference type="PhylomeDB" id="Q2RYF4"/>
<dbReference type="Proteomes" id="UP000001929">
    <property type="component" value="Chromosome"/>
</dbReference>
<dbReference type="GO" id="GO:0005886">
    <property type="term" value="C:plasma membrane"/>
    <property type="evidence" value="ECO:0007669"/>
    <property type="project" value="UniProtKB-SubCell"/>
</dbReference>
<dbReference type="GO" id="GO:0020037">
    <property type="term" value="F:heme binding"/>
    <property type="evidence" value="ECO:0007669"/>
    <property type="project" value="InterPro"/>
</dbReference>
<dbReference type="GO" id="GO:0046872">
    <property type="term" value="F:metal ion binding"/>
    <property type="evidence" value="ECO:0007669"/>
    <property type="project" value="UniProtKB-KW"/>
</dbReference>
<dbReference type="GO" id="GO:0017004">
    <property type="term" value="P:cytochrome complex assembly"/>
    <property type="evidence" value="ECO:0007669"/>
    <property type="project" value="UniProtKB-KW"/>
</dbReference>
<dbReference type="FunFam" id="2.40.50.140:FF:000104">
    <property type="entry name" value="Cytochrome c-type biogenesis protein CcmE"/>
    <property type="match status" value="1"/>
</dbReference>
<dbReference type="Gene3D" id="2.40.50.140">
    <property type="entry name" value="Nucleic acid-binding proteins"/>
    <property type="match status" value="1"/>
</dbReference>
<dbReference type="HAMAP" id="MF_01959">
    <property type="entry name" value="CcmE"/>
    <property type="match status" value="1"/>
</dbReference>
<dbReference type="InterPro" id="IPR004329">
    <property type="entry name" value="CcmE"/>
</dbReference>
<dbReference type="InterPro" id="IPR036127">
    <property type="entry name" value="CcmE-like_sf"/>
</dbReference>
<dbReference type="InterPro" id="IPR012340">
    <property type="entry name" value="NA-bd_OB-fold"/>
</dbReference>
<dbReference type="NCBIfam" id="NF009727">
    <property type="entry name" value="PRK13254.1-1"/>
    <property type="match status" value="1"/>
</dbReference>
<dbReference type="NCBIfam" id="NF009729">
    <property type="entry name" value="PRK13254.1-3"/>
    <property type="match status" value="1"/>
</dbReference>
<dbReference type="NCBIfam" id="NF009731">
    <property type="entry name" value="PRK13254.1-5"/>
    <property type="match status" value="1"/>
</dbReference>
<dbReference type="PANTHER" id="PTHR34128">
    <property type="entry name" value="CYTOCHROME C-TYPE BIOGENESIS PROTEIN CCME HOMOLOG, MITOCHONDRIAL"/>
    <property type="match status" value="1"/>
</dbReference>
<dbReference type="PANTHER" id="PTHR34128:SF2">
    <property type="entry name" value="CYTOCHROME C-TYPE BIOGENESIS PROTEIN CCME HOMOLOG, MITOCHONDRIAL"/>
    <property type="match status" value="1"/>
</dbReference>
<dbReference type="Pfam" id="PF03100">
    <property type="entry name" value="CcmE"/>
    <property type="match status" value="1"/>
</dbReference>
<dbReference type="SUPFAM" id="SSF82093">
    <property type="entry name" value="Heme chaperone CcmE"/>
    <property type="match status" value="1"/>
</dbReference>
<proteinExistence type="inferred from homology"/>
<name>CCME_RHORT</name>
<keyword id="KW-0997">Cell inner membrane</keyword>
<keyword id="KW-1003">Cell membrane</keyword>
<keyword id="KW-0201">Cytochrome c-type biogenesis</keyword>
<keyword id="KW-0349">Heme</keyword>
<keyword id="KW-0408">Iron</keyword>
<keyword id="KW-0472">Membrane</keyword>
<keyword id="KW-0479">Metal-binding</keyword>
<keyword id="KW-1185">Reference proteome</keyword>
<keyword id="KW-0735">Signal-anchor</keyword>
<keyword id="KW-0812">Transmembrane</keyword>
<keyword id="KW-1133">Transmembrane helix</keyword>
<protein>
    <recommendedName>
        <fullName evidence="1">Cytochrome c-type biogenesis protein CcmE</fullName>
    </recommendedName>
    <alternativeName>
        <fullName evidence="1">Cytochrome c maturation protein E</fullName>
    </alternativeName>
    <alternativeName>
        <fullName evidence="1">Heme chaperone CcmE</fullName>
    </alternativeName>
</protein>
<organism>
    <name type="scientific">Rhodospirillum rubrum (strain ATCC 11170 / ATH 1.1.1 / DSM 467 / LMG 4362 / NCIMB 8255 / S1)</name>
    <dbReference type="NCBI Taxonomy" id="269796"/>
    <lineage>
        <taxon>Bacteria</taxon>
        <taxon>Pseudomonadati</taxon>
        <taxon>Pseudomonadota</taxon>
        <taxon>Alphaproteobacteria</taxon>
        <taxon>Rhodospirillales</taxon>
        <taxon>Rhodospirillaceae</taxon>
        <taxon>Rhodospirillum</taxon>
    </lineage>
</organism>
<comment type="function">
    <text evidence="1">Heme chaperone required for the biogenesis of c-type cytochromes. Transiently binds heme delivered by CcmC and transfers the heme to apo-cytochromes in a process facilitated by CcmF and CcmH.</text>
</comment>
<comment type="subcellular location">
    <subcellularLocation>
        <location evidence="1">Cell inner membrane</location>
        <topology evidence="1">Single-pass type II membrane protein</topology>
        <orientation evidence="1">Periplasmic side</orientation>
    </subcellularLocation>
</comment>
<comment type="similarity">
    <text evidence="1">Belongs to the CcmE/CycJ family.</text>
</comment>
<gene>
    <name evidence="1" type="primary">ccmE</name>
    <name evidence="1" type="synonym">cycJ</name>
    <name type="ordered locus">Rru_A0036</name>
</gene>
<accession>Q2RYF4</accession>
<feature type="chain" id="PRO_0000238854" description="Cytochrome c-type biogenesis protein CcmE">
    <location>
        <begin position="1"/>
        <end position="153"/>
    </location>
</feature>
<feature type="topological domain" description="Cytoplasmic" evidence="1">
    <location>
        <begin position="1"/>
        <end position="7"/>
    </location>
</feature>
<feature type="transmembrane region" description="Helical; Signal-anchor for type II membrane protein" evidence="1">
    <location>
        <begin position="8"/>
        <end position="28"/>
    </location>
</feature>
<feature type="topological domain" description="Periplasmic" evidence="1">
    <location>
        <begin position="29"/>
        <end position="153"/>
    </location>
</feature>
<feature type="region of interest" description="Disordered" evidence="2">
    <location>
        <begin position="132"/>
        <end position="153"/>
    </location>
</feature>
<feature type="compositionally biased region" description="Low complexity" evidence="2">
    <location>
        <begin position="144"/>
        <end position="153"/>
    </location>
</feature>
<feature type="binding site" description="covalent" evidence="1">
    <location>
        <position position="121"/>
    </location>
    <ligand>
        <name>heme</name>
        <dbReference type="ChEBI" id="CHEBI:30413"/>
    </ligand>
</feature>
<feature type="binding site" description="axial binding residue" evidence="1">
    <location>
        <position position="125"/>
    </location>
    <ligand>
        <name>heme</name>
        <dbReference type="ChEBI" id="CHEBI:30413"/>
    </ligand>
    <ligandPart>
        <name>Fe</name>
        <dbReference type="ChEBI" id="CHEBI:18248"/>
    </ligandPart>
</feature>
<sequence>MTRKKRRLYFVVLGMLALFAAAGLTLTAFQDNLVFFYSPTDLQEKGVDQGRRFRVGGLVEEGSVVRDGETVRFIVTDLMNTVTVRYTGMLPDLFREGQGVVAEGAMDGAGTFVAASVLAKHDENYMPPEVAESLKASGKWQHGPPTAAAAPAP</sequence>